<name>SYA_MYCGE</name>
<gene>
    <name evidence="1" type="primary">alaS</name>
    <name type="ordered locus">MG292</name>
</gene>
<sequence>MNWTTDKVRQTWLDYFAKKDHLVLASKSLIPINDPSLLWINSGVATLKDYFSARKTPPSKRLVNAQICLRVNDIENVGFTSRHQTLFEMLGNFSIGDYFKTEAIDFAFDLLVNYYQLDPKRFYITVYEDDETTYKRWIKHKIDKNHIIKCDKSRNFWDLGLGPCGPCTEIYYDRGEKFDPKKIGEKLFFEDIENDRYVEIWNIVFSQFNNDGNGNYTELAQKNIDTGAGIERLVSVLQNSPTNFDTDIFLKLIKIIEAFCPFKYDPNSYFTFDPQKVKEQSYFRIIADHFKAITFTISEGVLPGPNERNYVVRRLLRRALIACKKLQLNLAFIEKIIDEIIASYENYYQHLKAKNETVKQVVLKEINAFNKTIDLGLVLFEKSVKNNTLTPQLTFQLNETYGFPVEIIRELVNQKGLTIDWTVFDQLMAKHRSISKQNNQTINFEKQNINLVNFKTKSTFFYHKNKINAKVIGLFDENYLPVKELNNQSGYVVFDQTVLYATSGGQRYDEGSCINHSNNNDQKISFQGVFKGPNKQHFHYFLVGSFKLNDQVTLSHDETWRKLAANNHSLEHLLHAALQKEIDPLIKQSGAFKSAQKATIDFNLNRHLTRNELEKVENKIRSLIKQKISSKEIFTDFEGSQKLNAIAYFEEEYSQHEILRVIRFGDYSVELCGGTHVANTASIEDCFITDFYSLGAGRWRIEIISSNETINNYLKAENQKLIQLKSELEKVLSLIDSSIFKVELKELQQRLDKFILPEKITQLRDASDTLLALKNDINQLKTKNYKVSQQALALSIKKQLLSLVDENKSYVIATFNDVEPKLLLQTLHDVFNQNQTKNFLIINQFNESNSFIVIGNKTTTIIEKLRNSFNLKGGGNDKLFRGSFQDNVTPQKLNELFQNK</sequence>
<dbReference type="EC" id="6.1.1.7" evidence="1"/>
<dbReference type="EMBL" id="L43967">
    <property type="protein sequence ID" value="AAC71513.1"/>
    <property type="molecule type" value="Genomic_DNA"/>
</dbReference>
<dbReference type="PIR" id="C64232">
    <property type="entry name" value="C64232"/>
</dbReference>
<dbReference type="RefSeq" id="WP_010869412.1">
    <property type="nucleotide sequence ID" value="NC_000908.2"/>
</dbReference>
<dbReference type="SMR" id="P47534"/>
<dbReference type="FunCoup" id="P47534">
    <property type="interactions" value="202"/>
</dbReference>
<dbReference type="STRING" id="243273.MG_292"/>
<dbReference type="GeneID" id="88282455"/>
<dbReference type="KEGG" id="mge:MG_292"/>
<dbReference type="eggNOG" id="COG0013">
    <property type="taxonomic scope" value="Bacteria"/>
</dbReference>
<dbReference type="HOGENOM" id="CLU_004485_1_1_14"/>
<dbReference type="InParanoid" id="P47534"/>
<dbReference type="OrthoDB" id="9803884at2"/>
<dbReference type="BioCyc" id="MGEN243273:G1GJ2-361-MONOMER"/>
<dbReference type="Proteomes" id="UP000000807">
    <property type="component" value="Chromosome"/>
</dbReference>
<dbReference type="GO" id="GO:0005829">
    <property type="term" value="C:cytosol"/>
    <property type="evidence" value="ECO:0000318"/>
    <property type="project" value="GO_Central"/>
</dbReference>
<dbReference type="GO" id="GO:0004813">
    <property type="term" value="F:alanine-tRNA ligase activity"/>
    <property type="evidence" value="ECO:0000318"/>
    <property type="project" value="GO_Central"/>
</dbReference>
<dbReference type="GO" id="GO:0002161">
    <property type="term" value="F:aminoacyl-tRNA deacylase activity"/>
    <property type="evidence" value="ECO:0000318"/>
    <property type="project" value="GO_Central"/>
</dbReference>
<dbReference type="GO" id="GO:0005524">
    <property type="term" value="F:ATP binding"/>
    <property type="evidence" value="ECO:0007669"/>
    <property type="project" value="UniProtKB-UniRule"/>
</dbReference>
<dbReference type="GO" id="GO:0000049">
    <property type="term" value="F:tRNA binding"/>
    <property type="evidence" value="ECO:0007669"/>
    <property type="project" value="UniProtKB-KW"/>
</dbReference>
<dbReference type="GO" id="GO:0008270">
    <property type="term" value="F:zinc ion binding"/>
    <property type="evidence" value="ECO:0007669"/>
    <property type="project" value="UniProtKB-UniRule"/>
</dbReference>
<dbReference type="GO" id="GO:0006419">
    <property type="term" value="P:alanyl-tRNA aminoacylation"/>
    <property type="evidence" value="ECO:0000318"/>
    <property type="project" value="GO_Central"/>
</dbReference>
<dbReference type="CDD" id="cd00673">
    <property type="entry name" value="AlaRS_core"/>
    <property type="match status" value="1"/>
</dbReference>
<dbReference type="FunFam" id="3.30.930.10:FF:000046">
    <property type="entry name" value="Alanine--tRNA ligase"/>
    <property type="match status" value="1"/>
</dbReference>
<dbReference type="FunFam" id="3.30.980.10:FF:000004">
    <property type="entry name" value="Alanine--tRNA ligase, cytoplasmic"/>
    <property type="match status" value="1"/>
</dbReference>
<dbReference type="FunFam" id="2.40.30.130:FF:000042">
    <property type="entry name" value="Alanyl-tRNA synthetase family protein"/>
    <property type="match status" value="1"/>
</dbReference>
<dbReference type="Gene3D" id="2.40.30.130">
    <property type="match status" value="1"/>
</dbReference>
<dbReference type="Gene3D" id="3.30.930.10">
    <property type="entry name" value="Bira Bifunctional Protein, Domain 2"/>
    <property type="match status" value="1"/>
</dbReference>
<dbReference type="Gene3D" id="3.30.980.10">
    <property type="entry name" value="Threonyl-trna Synthetase, Chain A, domain 2"/>
    <property type="match status" value="1"/>
</dbReference>
<dbReference type="HAMAP" id="MF_00036_B">
    <property type="entry name" value="Ala_tRNA_synth_B"/>
    <property type="match status" value="1"/>
</dbReference>
<dbReference type="InterPro" id="IPR045864">
    <property type="entry name" value="aa-tRNA-synth_II/BPL/LPL"/>
</dbReference>
<dbReference type="InterPro" id="IPR002318">
    <property type="entry name" value="Ala-tRNA-lgiase_IIc"/>
</dbReference>
<dbReference type="InterPro" id="IPR018162">
    <property type="entry name" value="Ala-tRNA-ligase_IIc_anticod-bd"/>
</dbReference>
<dbReference type="InterPro" id="IPR018165">
    <property type="entry name" value="Ala-tRNA-synth_IIc_core"/>
</dbReference>
<dbReference type="InterPro" id="IPR018164">
    <property type="entry name" value="Ala-tRNA-synth_IIc_N"/>
</dbReference>
<dbReference type="InterPro" id="IPR050058">
    <property type="entry name" value="Ala-tRNA_ligase"/>
</dbReference>
<dbReference type="InterPro" id="IPR023033">
    <property type="entry name" value="Ala_tRNA_ligase_euk/bac"/>
</dbReference>
<dbReference type="InterPro" id="IPR018163">
    <property type="entry name" value="Thr/Ala-tRNA-synth_IIc_edit"/>
</dbReference>
<dbReference type="InterPro" id="IPR009000">
    <property type="entry name" value="Transl_B-barrel_sf"/>
</dbReference>
<dbReference type="InterPro" id="IPR012947">
    <property type="entry name" value="tRNA_SAD"/>
</dbReference>
<dbReference type="NCBIfam" id="TIGR00344">
    <property type="entry name" value="alaS"/>
    <property type="match status" value="1"/>
</dbReference>
<dbReference type="PANTHER" id="PTHR11777:SF9">
    <property type="entry name" value="ALANINE--TRNA LIGASE, CYTOPLASMIC"/>
    <property type="match status" value="1"/>
</dbReference>
<dbReference type="PANTHER" id="PTHR11777">
    <property type="entry name" value="ALANYL-TRNA SYNTHETASE"/>
    <property type="match status" value="1"/>
</dbReference>
<dbReference type="Pfam" id="PF01411">
    <property type="entry name" value="tRNA-synt_2c"/>
    <property type="match status" value="1"/>
</dbReference>
<dbReference type="Pfam" id="PF07973">
    <property type="entry name" value="tRNA_SAD"/>
    <property type="match status" value="1"/>
</dbReference>
<dbReference type="PRINTS" id="PR00980">
    <property type="entry name" value="TRNASYNTHALA"/>
</dbReference>
<dbReference type="SMART" id="SM00863">
    <property type="entry name" value="tRNA_SAD"/>
    <property type="match status" value="1"/>
</dbReference>
<dbReference type="SUPFAM" id="SSF55681">
    <property type="entry name" value="Class II aaRS and biotin synthetases"/>
    <property type="match status" value="1"/>
</dbReference>
<dbReference type="SUPFAM" id="SSF101353">
    <property type="entry name" value="Putative anticodon-binding domain of alanyl-tRNA synthetase (AlaRS)"/>
    <property type="match status" value="1"/>
</dbReference>
<dbReference type="SUPFAM" id="SSF55186">
    <property type="entry name" value="ThrRS/AlaRS common domain"/>
    <property type="match status" value="1"/>
</dbReference>
<dbReference type="SUPFAM" id="SSF50447">
    <property type="entry name" value="Translation proteins"/>
    <property type="match status" value="1"/>
</dbReference>
<dbReference type="PROSITE" id="PS50860">
    <property type="entry name" value="AA_TRNA_LIGASE_II_ALA"/>
    <property type="match status" value="1"/>
</dbReference>
<comment type="function">
    <text evidence="1">Catalyzes the attachment of alanine to tRNA(Ala) in a two-step reaction: alanine is first activated by ATP to form Ala-AMP and then transferred to the acceptor end of tRNA(Ala). Also edits incorrectly charged Ser-tRNA(Ala) and Gly-tRNA(Ala) via its editing domain.</text>
</comment>
<comment type="catalytic activity">
    <reaction evidence="1">
        <text>tRNA(Ala) + L-alanine + ATP = L-alanyl-tRNA(Ala) + AMP + diphosphate</text>
        <dbReference type="Rhea" id="RHEA:12540"/>
        <dbReference type="Rhea" id="RHEA-COMP:9657"/>
        <dbReference type="Rhea" id="RHEA-COMP:9923"/>
        <dbReference type="ChEBI" id="CHEBI:30616"/>
        <dbReference type="ChEBI" id="CHEBI:33019"/>
        <dbReference type="ChEBI" id="CHEBI:57972"/>
        <dbReference type="ChEBI" id="CHEBI:78442"/>
        <dbReference type="ChEBI" id="CHEBI:78497"/>
        <dbReference type="ChEBI" id="CHEBI:456215"/>
        <dbReference type="EC" id="6.1.1.7"/>
    </reaction>
</comment>
<comment type="cofactor">
    <cofactor evidence="1">
        <name>Zn(2+)</name>
        <dbReference type="ChEBI" id="CHEBI:29105"/>
    </cofactor>
    <text evidence="1">Binds 1 zinc ion per subunit.</text>
</comment>
<comment type="subcellular location">
    <subcellularLocation>
        <location evidence="1">Cytoplasm</location>
    </subcellularLocation>
</comment>
<comment type="domain">
    <text evidence="1">Consists of three domains; the N-terminal catalytic domain, the editing domain and the C-terminal C-Ala domain. The editing domain removes incorrectly charged amino acids, while the C-Ala domain, along with tRNA(Ala), serves as a bridge to cooperatively bring together the editing and aminoacylation centers thus stimulating deacylation of misacylated tRNAs.</text>
</comment>
<comment type="similarity">
    <text evidence="1">Belongs to the class-II aminoacyl-tRNA synthetase family.</text>
</comment>
<protein>
    <recommendedName>
        <fullName evidence="1">Alanine--tRNA ligase</fullName>
        <ecNumber evidence="1">6.1.1.7</ecNumber>
    </recommendedName>
    <alternativeName>
        <fullName evidence="1">Alanyl-tRNA synthetase</fullName>
        <shortName evidence="1">AlaRS</shortName>
    </alternativeName>
</protein>
<reference key="1">
    <citation type="journal article" date="1995" name="Science">
        <title>The minimal gene complement of Mycoplasma genitalium.</title>
        <authorList>
            <person name="Fraser C.M."/>
            <person name="Gocayne J.D."/>
            <person name="White O."/>
            <person name="Adams M.D."/>
            <person name="Clayton R.A."/>
            <person name="Fleischmann R.D."/>
            <person name="Bult C.J."/>
            <person name="Kerlavage A.R."/>
            <person name="Sutton G.G."/>
            <person name="Kelley J.M."/>
            <person name="Fritchman J.L."/>
            <person name="Weidman J.F."/>
            <person name="Small K.V."/>
            <person name="Sandusky M."/>
            <person name="Fuhrmann J.L."/>
            <person name="Nguyen D.T."/>
            <person name="Utterback T.R."/>
            <person name="Saudek D.M."/>
            <person name="Phillips C.A."/>
            <person name="Merrick J.M."/>
            <person name="Tomb J.-F."/>
            <person name="Dougherty B.A."/>
            <person name="Bott K.F."/>
            <person name="Hu P.-C."/>
            <person name="Lucier T.S."/>
            <person name="Peterson S.N."/>
            <person name="Smith H.O."/>
            <person name="Hutchison C.A. III"/>
            <person name="Venter J.C."/>
        </authorList>
    </citation>
    <scope>NUCLEOTIDE SEQUENCE [LARGE SCALE GENOMIC DNA]</scope>
    <source>
        <strain>ATCC 33530 / DSM 19775 / NCTC 10195 / G37</strain>
    </source>
</reference>
<evidence type="ECO:0000255" key="1">
    <source>
        <dbReference type="HAMAP-Rule" id="MF_00036"/>
    </source>
</evidence>
<proteinExistence type="inferred from homology"/>
<accession>P47534</accession>
<feature type="chain" id="PRO_0000075149" description="Alanine--tRNA ligase">
    <location>
        <begin position="1"/>
        <end position="900"/>
    </location>
</feature>
<feature type="binding site" evidence="1">
    <location>
        <position position="568"/>
    </location>
    <ligand>
        <name>Zn(2+)</name>
        <dbReference type="ChEBI" id="CHEBI:29105"/>
    </ligand>
</feature>
<feature type="binding site" evidence="1">
    <location>
        <position position="572"/>
    </location>
    <ligand>
        <name>Zn(2+)</name>
        <dbReference type="ChEBI" id="CHEBI:29105"/>
    </ligand>
</feature>
<feature type="binding site" evidence="1">
    <location>
        <position position="672"/>
    </location>
    <ligand>
        <name>Zn(2+)</name>
        <dbReference type="ChEBI" id="CHEBI:29105"/>
    </ligand>
</feature>
<feature type="binding site" evidence="1">
    <location>
        <position position="676"/>
    </location>
    <ligand>
        <name>Zn(2+)</name>
        <dbReference type="ChEBI" id="CHEBI:29105"/>
    </ligand>
</feature>
<organism>
    <name type="scientific">Mycoplasma genitalium (strain ATCC 33530 / DSM 19775 / NCTC 10195 / G37)</name>
    <name type="common">Mycoplasmoides genitalium</name>
    <dbReference type="NCBI Taxonomy" id="243273"/>
    <lineage>
        <taxon>Bacteria</taxon>
        <taxon>Bacillati</taxon>
        <taxon>Mycoplasmatota</taxon>
        <taxon>Mycoplasmoidales</taxon>
        <taxon>Mycoplasmoidaceae</taxon>
        <taxon>Mycoplasmoides</taxon>
    </lineage>
</organism>
<keyword id="KW-0030">Aminoacyl-tRNA synthetase</keyword>
<keyword id="KW-0067">ATP-binding</keyword>
<keyword id="KW-0963">Cytoplasm</keyword>
<keyword id="KW-0436">Ligase</keyword>
<keyword id="KW-0479">Metal-binding</keyword>
<keyword id="KW-0547">Nucleotide-binding</keyword>
<keyword id="KW-0648">Protein biosynthesis</keyword>
<keyword id="KW-1185">Reference proteome</keyword>
<keyword id="KW-0694">RNA-binding</keyword>
<keyword id="KW-0820">tRNA-binding</keyword>
<keyword id="KW-0862">Zinc</keyword>